<dbReference type="EC" id="2.7.7.6" evidence="1"/>
<dbReference type="EMBL" id="CP000826">
    <property type="protein sequence ID" value="ABV39387.1"/>
    <property type="molecule type" value="Genomic_DNA"/>
</dbReference>
<dbReference type="SMR" id="A8G8E7"/>
<dbReference type="STRING" id="399741.Spro_0277"/>
<dbReference type="KEGG" id="spe:Spro_0277"/>
<dbReference type="eggNOG" id="COG0085">
    <property type="taxonomic scope" value="Bacteria"/>
</dbReference>
<dbReference type="HOGENOM" id="CLU_000524_4_0_6"/>
<dbReference type="OrthoDB" id="9803954at2"/>
<dbReference type="GO" id="GO:0000428">
    <property type="term" value="C:DNA-directed RNA polymerase complex"/>
    <property type="evidence" value="ECO:0007669"/>
    <property type="project" value="UniProtKB-KW"/>
</dbReference>
<dbReference type="GO" id="GO:0003677">
    <property type="term" value="F:DNA binding"/>
    <property type="evidence" value="ECO:0007669"/>
    <property type="project" value="UniProtKB-UniRule"/>
</dbReference>
<dbReference type="GO" id="GO:0003899">
    <property type="term" value="F:DNA-directed RNA polymerase activity"/>
    <property type="evidence" value="ECO:0007669"/>
    <property type="project" value="UniProtKB-UniRule"/>
</dbReference>
<dbReference type="GO" id="GO:0032549">
    <property type="term" value="F:ribonucleoside binding"/>
    <property type="evidence" value="ECO:0007669"/>
    <property type="project" value="InterPro"/>
</dbReference>
<dbReference type="GO" id="GO:0006351">
    <property type="term" value="P:DNA-templated transcription"/>
    <property type="evidence" value="ECO:0007669"/>
    <property type="project" value="UniProtKB-UniRule"/>
</dbReference>
<dbReference type="CDD" id="cd00653">
    <property type="entry name" value="RNA_pol_B_RPB2"/>
    <property type="match status" value="1"/>
</dbReference>
<dbReference type="FunFam" id="2.30.150.10:FF:000001">
    <property type="entry name" value="DNA-directed RNA polymerase subunit beta"/>
    <property type="match status" value="1"/>
</dbReference>
<dbReference type="FunFam" id="2.40.270.10:FF:000003">
    <property type="entry name" value="DNA-directed RNA polymerase subunit beta"/>
    <property type="match status" value="1"/>
</dbReference>
<dbReference type="FunFam" id="2.40.270.10:FF:000004">
    <property type="entry name" value="DNA-directed RNA polymerase subunit beta"/>
    <property type="match status" value="1"/>
</dbReference>
<dbReference type="FunFam" id="2.40.50.100:FF:000006">
    <property type="entry name" value="DNA-directed RNA polymerase subunit beta"/>
    <property type="match status" value="1"/>
</dbReference>
<dbReference type="FunFam" id="2.40.50.150:FF:000001">
    <property type="entry name" value="DNA-directed RNA polymerase subunit beta"/>
    <property type="match status" value="1"/>
</dbReference>
<dbReference type="FunFam" id="3.90.1100.10:FF:000002">
    <property type="entry name" value="DNA-directed RNA polymerase subunit beta"/>
    <property type="match status" value="1"/>
</dbReference>
<dbReference type="FunFam" id="3.90.1110.10:FF:000001">
    <property type="entry name" value="DNA-directed RNA polymerase subunit beta"/>
    <property type="match status" value="1"/>
</dbReference>
<dbReference type="FunFam" id="3.90.1110.10:FF:000004">
    <property type="entry name" value="DNA-directed RNA polymerase subunit beta"/>
    <property type="match status" value="1"/>
</dbReference>
<dbReference type="FunFam" id="3.90.1800.10:FF:000001">
    <property type="entry name" value="DNA-directed RNA polymerase subunit beta"/>
    <property type="match status" value="1"/>
</dbReference>
<dbReference type="Gene3D" id="2.40.50.100">
    <property type="match status" value="1"/>
</dbReference>
<dbReference type="Gene3D" id="2.40.50.150">
    <property type="match status" value="1"/>
</dbReference>
<dbReference type="Gene3D" id="3.90.1100.10">
    <property type="match status" value="2"/>
</dbReference>
<dbReference type="Gene3D" id="6.10.140.1670">
    <property type="match status" value="1"/>
</dbReference>
<dbReference type="Gene3D" id="2.30.150.10">
    <property type="entry name" value="DNA-directed RNA polymerase, beta subunit, external 1 domain"/>
    <property type="match status" value="1"/>
</dbReference>
<dbReference type="Gene3D" id="2.40.270.10">
    <property type="entry name" value="DNA-directed RNA polymerase, subunit 2, domain 6"/>
    <property type="match status" value="1"/>
</dbReference>
<dbReference type="Gene3D" id="3.90.1800.10">
    <property type="entry name" value="RNA polymerase alpha subunit dimerisation domain"/>
    <property type="match status" value="1"/>
</dbReference>
<dbReference type="Gene3D" id="3.90.1110.10">
    <property type="entry name" value="RNA polymerase Rpb2, domain 2"/>
    <property type="match status" value="1"/>
</dbReference>
<dbReference type="HAMAP" id="MF_01321">
    <property type="entry name" value="RNApol_bact_RpoB"/>
    <property type="match status" value="1"/>
</dbReference>
<dbReference type="InterPro" id="IPR042107">
    <property type="entry name" value="DNA-dir_RNA_pol_bsu_ext_1_sf"/>
</dbReference>
<dbReference type="InterPro" id="IPR019462">
    <property type="entry name" value="DNA-dir_RNA_pol_bsu_external_1"/>
</dbReference>
<dbReference type="InterPro" id="IPR015712">
    <property type="entry name" value="DNA-dir_RNA_pol_su2"/>
</dbReference>
<dbReference type="InterPro" id="IPR007120">
    <property type="entry name" value="DNA-dir_RNAP_su2_dom"/>
</dbReference>
<dbReference type="InterPro" id="IPR037033">
    <property type="entry name" value="DNA-dir_RNAP_su2_hyb_sf"/>
</dbReference>
<dbReference type="InterPro" id="IPR010243">
    <property type="entry name" value="RNA_pol_bsu_bac"/>
</dbReference>
<dbReference type="InterPro" id="IPR007121">
    <property type="entry name" value="RNA_pol_bsu_CS"/>
</dbReference>
<dbReference type="InterPro" id="IPR007644">
    <property type="entry name" value="RNA_pol_bsu_protrusion"/>
</dbReference>
<dbReference type="InterPro" id="IPR007642">
    <property type="entry name" value="RNA_pol_Rpb2_2"/>
</dbReference>
<dbReference type="InterPro" id="IPR037034">
    <property type="entry name" value="RNA_pol_Rpb2_2_sf"/>
</dbReference>
<dbReference type="InterPro" id="IPR007645">
    <property type="entry name" value="RNA_pol_Rpb2_3"/>
</dbReference>
<dbReference type="InterPro" id="IPR007641">
    <property type="entry name" value="RNA_pol_Rpb2_7"/>
</dbReference>
<dbReference type="InterPro" id="IPR014724">
    <property type="entry name" value="RNA_pol_RPB2_OB-fold"/>
</dbReference>
<dbReference type="NCBIfam" id="NF001616">
    <property type="entry name" value="PRK00405.1"/>
    <property type="match status" value="1"/>
</dbReference>
<dbReference type="NCBIfam" id="TIGR02013">
    <property type="entry name" value="rpoB"/>
    <property type="match status" value="1"/>
</dbReference>
<dbReference type="PANTHER" id="PTHR20856">
    <property type="entry name" value="DNA-DIRECTED RNA POLYMERASE I SUBUNIT 2"/>
    <property type="match status" value="1"/>
</dbReference>
<dbReference type="Pfam" id="PF04563">
    <property type="entry name" value="RNA_pol_Rpb2_1"/>
    <property type="match status" value="1"/>
</dbReference>
<dbReference type="Pfam" id="PF04561">
    <property type="entry name" value="RNA_pol_Rpb2_2"/>
    <property type="match status" value="2"/>
</dbReference>
<dbReference type="Pfam" id="PF04565">
    <property type="entry name" value="RNA_pol_Rpb2_3"/>
    <property type="match status" value="1"/>
</dbReference>
<dbReference type="Pfam" id="PF10385">
    <property type="entry name" value="RNA_pol_Rpb2_45"/>
    <property type="match status" value="1"/>
</dbReference>
<dbReference type="Pfam" id="PF00562">
    <property type="entry name" value="RNA_pol_Rpb2_6"/>
    <property type="match status" value="1"/>
</dbReference>
<dbReference type="Pfam" id="PF04560">
    <property type="entry name" value="RNA_pol_Rpb2_7"/>
    <property type="match status" value="1"/>
</dbReference>
<dbReference type="SUPFAM" id="SSF64484">
    <property type="entry name" value="beta and beta-prime subunits of DNA dependent RNA-polymerase"/>
    <property type="match status" value="1"/>
</dbReference>
<dbReference type="PROSITE" id="PS01166">
    <property type="entry name" value="RNA_POL_BETA"/>
    <property type="match status" value="1"/>
</dbReference>
<sequence>MVYSYTEKKRIRKDFGKRPQVLDIPYLLSIQLDSFQKFIEQDPEGQHGLEAAFRSVFPIQSYSGNSELQYVSYRLGEPVFDVKECQIRGVTFSAPLRVKLRLVIYEREAPEGTVKDIKEQEVYMGEIPLMTENGTFVINGTERVIVSQLHRSPGVFFDSDKGKTHSSGKVLYNARIIPYRGSWLDFEFDPKDNLFVRIDRRRKLPATIILRALNYTTEQILDLFFAKVVYEIRDNKLQMELVPERLRGETASFDIEANGKIYIEKGRRITARHIRQLEKDEIQSIEVPVEYIAGKVVAKDYIDTNTGELICAANMELSLDLLAKLSQSGHKRIETLFTNDLDHGAYISETVRVDPTSDRLSALVEIYRMMRPGEPPTREAAENLFENLFFSEDRYDLSAVGRMKFNRSLLRDEIEGSGILSKDDIIEVMKKLIGIRNGKGEVDDIDHLGNRRIRSVGEMAENQFRVGLVRVERAVKERLSLGDLDTLMPQDMINAKPISAAVKEFFGSSQLSQFMDQNNPLSEITHKRRISALGPGGLTRERAGFEVRDVHPTHYGRVCPIETPEGPNIGLINSLSVYAQTNEYGFLETPYRRVRDGLVTDEINYLSAIEEGNFVIAQANSNLDDDGRFVEDLVTCRSKGESSLFSRDQVDYMDVSTQQVVSVGASLIPFLEHDDANRALMGANMQRQAVPTLRADKPLVGTGMERAVAVDSGVTAVARRGGVIQYVDASRIVIKVNEDEMLAGEAGIDIYNLTKYTRSNQNTCINQMPCVNLGEPIERGDVLADGPSTDLGELALGQNMRVAFMPWNGYNFEDSILVSERVVQEDRFTTIHIQELACVSRDTKLGPEEITADIPNVGEAALSKLDESGIVYIGAEVTGGDILVGKVTPKGETQLTPEEKLLRAIFGEKASDVKDSSLRVPNGVSGTIIDVQVFTRDGVEKDKRALEIEEMQLKQAKKDLTEELQILEAGLFARIHAVLVAGGVEAEKLSKLPRDRWLELGLTDEEKQNQLEQLAEQYDELKSDFEKKLDAKRRKITQGDDLAPGVLKIVKVYLAVKRQIQPGDKMAGRHGNKGVISKINPIEDMPYDENGTPVDIVLNPLGVPSRMNIGQILETHLGMAAKGIGEKINQMLKQHQEVAKLREFIQKAYDLGDDVCQKVDLNTFTDDEVLRLAENLKKGMPIATPVFDGAKESEIKQLLEMGGIPTSGQITLFDGRTGEQFERQVTVGYMYMLKLNHLVDDKMHARSTGSYSLVTQQPLGGKAQFGGQRFGEMEVWALEAYGAAYTLQEMLTVKSDDVNGRTKMYKNIVDGDHRMEPGMPESFNVLLKEIRSLGINIELEGE</sequence>
<feature type="chain" id="PRO_1000067553" description="DNA-directed RNA polymerase subunit beta">
    <location>
        <begin position="1"/>
        <end position="1342"/>
    </location>
</feature>
<evidence type="ECO:0000255" key="1">
    <source>
        <dbReference type="HAMAP-Rule" id="MF_01321"/>
    </source>
</evidence>
<reference key="1">
    <citation type="submission" date="2007-09" db="EMBL/GenBank/DDBJ databases">
        <title>Complete sequence of chromosome of Serratia proteamaculans 568.</title>
        <authorList>
            <consortium name="US DOE Joint Genome Institute"/>
            <person name="Copeland A."/>
            <person name="Lucas S."/>
            <person name="Lapidus A."/>
            <person name="Barry K."/>
            <person name="Glavina del Rio T."/>
            <person name="Dalin E."/>
            <person name="Tice H."/>
            <person name="Pitluck S."/>
            <person name="Chain P."/>
            <person name="Malfatti S."/>
            <person name="Shin M."/>
            <person name="Vergez L."/>
            <person name="Schmutz J."/>
            <person name="Larimer F."/>
            <person name="Land M."/>
            <person name="Hauser L."/>
            <person name="Kyrpides N."/>
            <person name="Kim E."/>
            <person name="Taghavi S."/>
            <person name="Newman L."/>
            <person name="Vangronsveld J."/>
            <person name="van der Lelie D."/>
            <person name="Richardson P."/>
        </authorList>
    </citation>
    <scope>NUCLEOTIDE SEQUENCE [LARGE SCALE GENOMIC DNA]</scope>
    <source>
        <strain>568</strain>
    </source>
</reference>
<protein>
    <recommendedName>
        <fullName evidence="1">DNA-directed RNA polymerase subunit beta</fullName>
        <shortName evidence="1">RNAP subunit beta</shortName>
        <ecNumber evidence="1">2.7.7.6</ecNumber>
    </recommendedName>
    <alternativeName>
        <fullName evidence="1">RNA polymerase subunit beta</fullName>
    </alternativeName>
    <alternativeName>
        <fullName evidence="1">Transcriptase subunit beta</fullName>
    </alternativeName>
</protein>
<proteinExistence type="inferred from homology"/>
<comment type="function">
    <text evidence="1">DNA-dependent RNA polymerase catalyzes the transcription of DNA into RNA using the four ribonucleoside triphosphates as substrates.</text>
</comment>
<comment type="catalytic activity">
    <reaction evidence="1">
        <text>RNA(n) + a ribonucleoside 5'-triphosphate = RNA(n+1) + diphosphate</text>
        <dbReference type="Rhea" id="RHEA:21248"/>
        <dbReference type="Rhea" id="RHEA-COMP:14527"/>
        <dbReference type="Rhea" id="RHEA-COMP:17342"/>
        <dbReference type="ChEBI" id="CHEBI:33019"/>
        <dbReference type="ChEBI" id="CHEBI:61557"/>
        <dbReference type="ChEBI" id="CHEBI:140395"/>
        <dbReference type="EC" id="2.7.7.6"/>
    </reaction>
</comment>
<comment type="subunit">
    <text evidence="1">The RNAP catalytic core consists of 2 alpha, 1 beta, 1 beta' and 1 omega subunit. When a sigma factor is associated with the core the holoenzyme is formed, which can initiate transcription.</text>
</comment>
<comment type="similarity">
    <text evidence="1">Belongs to the RNA polymerase beta chain family.</text>
</comment>
<name>RPOB_SERP5</name>
<keyword id="KW-0240">DNA-directed RNA polymerase</keyword>
<keyword id="KW-0548">Nucleotidyltransferase</keyword>
<keyword id="KW-0804">Transcription</keyword>
<keyword id="KW-0808">Transferase</keyword>
<gene>
    <name evidence="1" type="primary">rpoB</name>
    <name type="ordered locus">Spro_0277</name>
</gene>
<organism>
    <name type="scientific">Serratia proteamaculans (strain 568)</name>
    <dbReference type="NCBI Taxonomy" id="399741"/>
    <lineage>
        <taxon>Bacteria</taxon>
        <taxon>Pseudomonadati</taxon>
        <taxon>Pseudomonadota</taxon>
        <taxon>Gammaproteobacteria</taxon>
        <taxon>Enterobacterales</taxon>
        <taxon>Yersiniaceae</taxon>
        <taxon>Serratia</taxon>
    </lineage>
</organism>
<accession>A8G8E7</accession>